<name>PP418_ARATH</name>
<evidence type="ECO:0000305" key="1"/>
<feature type="chain" id="PRO_0000363555" description="Pentatricopeptide repeat-containing protein At5g46100">
    <location>
        <begin position="1"/>
        <end position="472"/>
    </location>
</feature>
<feature type="repeat" description="PPR 1">
    <location>
        <begin position="50"/>
        <end position="84"/>
    </location>
</feature>
<feature type="repeat" description="PPR 2">
    <location>
        <begin position="85"/>
        <end position="119"/>
    </location>
</feature>
<feature type="repeat" description="PPR 3">
    <location>
        <begin position="120"/>
        <end position="154"/>
    </location>
</feature>
<feature type="repeat" description="PPR 4">
    <location>
        <begin position="155"/>
        <end position="190"/>
    </location>
</feature>
<feature type="repeat" description="PPR 5">
    <location>
        <begin position="191"/>
        <end position="225"/>
    </location>
</feature>
<feature type="repeat" description="PPR 6">
    <location>
        <begin position="226"/>
        <end position="260"/>
    </location>
</feature>
<feature type="repeat" description="PPR 7">
    <location>
        <begin position="261"/>
        <end position="295"/>
    </location>
</feature>
<feature type="repeat" description="PPR 8">
    <location>
        <begin position="296"/>
        <end position="330"/>
    </location>
</feature>
<feature type="repeat" description="PPR 9">
    <location>
        <begin position="331"/>
        <end position="365"/>
    </location>
</feature>
<feature type="repeat" description="PPR 10">
    <location>
        <begin position="373"/>
        <end position="406"/>
    </location>
</feature>
<feature type="repeat" description="PPR 11">
    <location>
        <begin position="407"/>
        <end position="441"/>
    </location>
</feature>
<sequence>MGSKVMMFKWSKNITPSQVIKLMRAEKDVEKSMAVFDSATAEYANGYVHDQSSFGYMVLRLVSANKFKAAEDLIVRMKIENCVVSEDILLSICRGYGRVHRPFDSLRVFHKMKDFDCDPSQKAYVTVLAILVEENQLNLAFKFYKNMREIGLPPTVASLNVLIKALCRNDGTVDAGLKIFLEMPKRGCDPDSYTYGTLISGLCRFGRIDEAKKLFTEMVEKDCAPTVVTYTSLINGLCGSKNVDEAMRYLEEMKSKGIEPNVFTYSSLMDGLCKDGRSLQAMELFEMMMARGCRPNMVTYTTLITGLCKEQKIQEAVELLDRMNLQGLKPDAGLYGKVISGFCAISKFREAANFLDEMILGGITPNRLTWNIHVKTSNEVVRGLCANYPSRAFTLYLSMRSRGISVEVETLESLVKCLCKKGEFQKAVQLVDEIVTDGCIPSKGTWKLLIGHTLDKTIVGEASDTLLRDLDI</sequence>
<keyword id="KW-1185">Reference proteome</keyword>
<keyword id="KW-0677">Repeat</keyword>
<comment type="similarity">
    <text evidence="1">Belongs to the PPR family. P subfamily.</text>
</comment>
<comment type="online information" name="Pentatricopeptide repeat proteins">
    <link uri="https://ppr.plantenergy.uwa.edu.au"/>
</comment>
<dbReference type="EMBL" id="AB006698">
    <property type="protein sequence ID" value="BAB08255.1"/>
    <property type="molecule type" value="Genomic_DNA"/>
</dbReference>
<dbReference type="EMBL" id="CP002688">
    <property type="protein sequence ID" value="AED95337.1"/>
    <property type="molecule type" value="Genomic_DNA"/>
</dbReference>
<dbReference type="RefSeq" id="NP_199422.1">
    <property type="nucleotide sequence ID" value="NM_123978.2"/>
</dbReference>
<dbReference type="SMR" id="Q9FNL2"/>
<dbReference type="FunCoup" id="Q9FNL2">
    <property type="interactions" value="720"/>
</dbReference>
<dbReference type="PaxDb" id="3702-AT5G46100.1"/>
<dbReference type="ProteomicsDB" id="249299"/>
<dbReference type="EnsemblPlants" id="AT5G46100.1">
    <property type="protein sequence ID" value="AT5G46100.1"/>
    <property type="gene ID" value="AT5G46100"/>
</dbReference>
<dbReference type="GeneID" id="834651"/>
<dbReference type="Gramene" id="AT5G46100.1">
    <property type="protein sequence ID" value="AT5G46100.1"/>
    <property type="gene ID" value="AT5G46100"/>
</dbReference>
<dbReference type="KEGG" id="ath:AT5G46100"/>
<dbReference type="Araport" id="AT5G46100"/>
<dbReference type="TAIR" id="AT5G46100"/>
<dbReference type="eggNOG" id="KOG4197">
    <property type="taxonomic scope" value="Eukaryota"/>
</dbReference>
<dbReference type="HOGENOM" id="CLU_002706_49_0_1"/>
<dbReference type="InParanoid" id="Q9FNL2"/>
<dbReference type="OMA" id="KWPKQIT"/>
<dbReference type="PhylomeDB" id="Q9FNL2"/>
<dbReference type="PRO" id="PR:Q9FNL2"/>
<dbReference type="Proteomes" id="UP000006548">
    <property type="component" value="Chromosome 5"/>
</dbReference>
<dbReference type="ExpressionAtlas" id="Q9FNL2">
    <property type="expression patterns" value="baseline and differential"/>
</dbReference>
<dbReference type="FunFam" id="1.25.40.10:FF:000558">
    <property type="entry name" value="Pentatricopeptide repeat-containing protein At5g39710"/>
    <property type="match status" value="1"/>
</dbReference>
<dbReference type="Gene3D" id="1.25.40.10">
    <property type="entry name" value="Tetratricopeptide repeat domain"/>
    <property type="match status" value="4"/>
</dbReference>
<dbReference type="InterPro" id="IPR002885">
    <property type="entry name" value="Pentatricopeptide_rpt"/>
</dbReference>
<dbReference type="InterPro" id="IPR011990">
    <property type="entry name" value="TPR-like_helical_dom_sf"/>
</dbReference>
<dbReference type="NCBIfam" id="TIGR00756">
    <property type="entry name" value="PPR"/>
    <property type="match status" value="7"/>
</dbReference>
<dbReference type="PANTHER" id="PTHR47938:SF35">
    <property type="entry name" value="PENTATRICOPEPTIDE REPEAT-CONTAINING PROTEIN 4, MITOCHONDRIAL-RELATED"/>
    <property type="match status" value="1"/>
</dbReference>
<dbReference type="PANTHER" id="PTHR47938">
    <property type="entry name" value="RESPIRATORY COMPLEX I CHAPERONE (CIA84), PUTATIVE (AFU_ORTHOLOGUE AFUA_2G06020)-RELATED"/>
    <property type="match status" value="1"/>
</dbReference>
<dbReference type="Pfam" id="PF01535">
    <property type="entry name" value="PPR"/>
    <property type="match status" value="2"/>
</dbReference>
<dbReference type="Pfam" id="PF12854">
    <property type="entry name" value="PPR_1"/>
    <property type="match status" value="2"/>
</dbReference>
<dbReference type="Pfam" id="PF13041">
    <property type="entry name" value="PPR_2"/>
    <property type="match status" value="2"/>
</dbReference>
<dbReference type="SUPFAM" id="SSF81901">
    <property type="entry name" value="HCP-like"/>
    <property type="match status" value="1"/>
</dbReference>
<dbReference type="PROSITE" id="PS51375">
    <property type="entry name" value="PPR"/>
    <property type="match status" value="11"/>
</dbReference>
<protein>
    <recommendedName>
        <fullName>Pentatricopeptide repeat-containing protein At5g46100</fullName>
    </recommendedName>
</protein>
<reference key="1">
    <citation type="journal article" date="1997" name="DNA Res.">
        <title>Structural analysis of Arabidopsis thaliana chromosome 5. II. Sequence features of the regions of 1,044,062 bp covered by thirteen physically assigned P1 clones.</title>
        <authorList>
            <person name="Kotani H."/>
            <person name="Nakamura Y."/>
            <person name="Sato S."/>
            <person name="Kaneko T."/>
            <person name="Asamizu E."/>
            <person name="Miyajima N."/>
            <person name="Tabata S."/>
        </authorList>
    </citation>
    <scope>NUCLEOTIDE SEQUENCE [LARGE SCALE GENOMIC DNA]</scope>
    <source>
        <strain>cv. Columbia</strain>
    </source>
</reference>
<reference key="2">
    <citation type="journal article" date="2017" name="Plant J.">
        <title>Araport11: a complete reannotation of the Arabidopsis thaliana reference genome.</title>
        <authorList>
            <person name="Cheng C.Y."/>
            <person name="Krishnakumar V."/>
            <person name="Chan A.P."/>
            <person name="Thibaud-Nissen F."/>
            <person name="Schobel S."/>
            <person name="Town C.D."/>
        </authorList>
    </citation>
    <scope>GENOME REANNOTATION</scope>
    <source>
        <strain>cv. Columbia</strain>
    </source>
</reference>
<reference key="3">
    <citation type="journal article" date="2004" name="Plant Cell">
        <title>Genome-wide analysis of Arabidopsis pentatricopeptide repeat proteins reveals their essential role in organelle biogenesis.</title>
        <authorList>
            <person name="Lurin C."/>
            <person name="Andres C."/>
            <person name="Aubourg S."/>
            <person name="Bellaoui M."/>
            <person name="Bitton F."/>
            <person name="Bruyere C."/>
            <person name="Caboche M."/>
            <person name="Debast C."/>
            <person name="Gualberto J."/>
            <person name="Hoffmann B."/>
            <person name="Lecharny A."/>
            <person name="Le Ret M."/>
            <person name="Martin-Magniette M.-L."/>
            <person name="Mireau H."/>
            <person name="Peeters N."/>
            <person name="Renou J.-P."/>
            <person name="Szurek B."/>
            <person name="Taconnat L."/>
            <person name="Small I."/>
        </authorList>
    </citation>
    <scope>GENE FAMILY</scope>
</reference>
<organism>
    <name type="scientific">Arabidopsis thaliana</name>
    <name type="common">Mouse-ear cress</name>
    <dbReference type="NCBI Taxonomy" id="3702"/>
    <lineage>
        <taxon>Eukaryota</taxon>
        <taxon>Viridiplantae</taxon>
        <taxon>Streptophyta</taxon>
        <taxon>Embryophyta</taxon>
        <taxon>Tracheophyta</taxon>
        <taxon>Spermatophyta</taxon>
        <taxon>Magnoliopsida</taxon>
        <taxon>eudicotyledons</taxon>
        <taxon>Gunneridae</taxon>
        <taxon>Pentapetalae</taxon>
        <taxon>rosids</taxon>
        <taxon>malvids</taxon>
        <taxon>Brassicales</taxon>
        <taxon>Brassicaceae</taxon>
        <taxon>Camelineae</taxon>
        <taxon>Arabidopsis</taxon>
    </lineage>
</organism>
<proteinExistence type="evidence at transcript level"/>
<accession>Q9FNL2</accession>
<gene>
    <name type="ordered locus">At5g46100</name>
    <name type="ORF">MCL19.15</name>
</gene>